<keyword id="KW-0067">ATP-binding</keyword>
<keyword id="KW-0436">Ligase</keyword>
<keyword id="KW-0460">Magnesium</keyword>
<keyword id="KW-0479">Metal-binding</keyword>
<keyword id="KW-0520">NAD</keyword>
<keyword id="KW-0547">Nucleotide-binding</keyword>
<protein>
    <recommendedName>
        <fullName evidence="1">NH(3)-dependent NAD(+) synthetase</fullName>
        <ecNumber evidence="1">6.3.1.5</ecNumber>
    </recommendedName>
</protein>
<name>NADE_LISW6</name>
<reference key="1">
    <citation type="journal article" date="2006" name="J. Bacteriol.">
        <title>Whole-genome sequence of Listeria welshimeri reveals common steps in genome reduction with Listeria innocua as compared to Listeria monocytogenes.</title>
        <authorList>
            <person name="Hain T."/>
            <person name="Steinweg C."/>
            <person name="Kuenne C.T."/>
            <person name="Billion A."/>
            <person name="Ghai R."/>
            <person name="Chatterjee S.S."/>
            <person name="Domann E."/>
            <person name="Kaerst U."/>
            <person name="Goesmann A."/>
            <person name="Bekel T."/>
            <person name="Bartels D."/>
            <person name="Kaiser O."/>
            <person name="Meyer F."/>
            <person name="Puehler A."/>
            <person name="Weisshaar B."/>
            <person name="Wehland J."/>
            <person name="Liang C."/>
            <person name="Dandekar T."/>
            <person name="Lampidis R."/>
            <person name="Kreft J."/>
            <person name="Goebel W."/>
            <person name="Chakraborty T."/>
        </authorList>
    </citation>
    <scope>NUCLEOTIDE SEQUENCE [LARGE SCALE GENOMIC DNA]</scope>
    <source>
        <strain>ATCC 35897 / DSM 20650 / CCUG 15529 / CIP 8149 / NCTC 11857 / SLCC 5334 / V8</strain>
    </source>
</reference>
<organism>
    <name type="scientific">Listeria welshimeri serovar 6b (strain ATCC 35897 / DSM 20650 / CCUG 15529 / CIP 8149 / NCTC 11857 / SLCC 5334 / V8)</name>
    <dbReference type="NCBI Taxonomy" id="386043"/>
    <lineage>
        <taxon>Bacteria</taxon>
        <taxon>Bacillati</taxon>
        <taxon>Bacillota</taxon>
        <taxon>Bacilli</taxon>
        <taxon>Bacillales</taxon>
        <taxon>Listeriaceae</taxon>
        <taxon>Listeria</taxon>
    </lineage>
</organism>
<comment type="function">
    <text evidence="1">Catalyzes the ATP-dependent amidation of deamido-NAD to form NAD. Uses ammonia as a nitrogen source.</text>
</comment>
<comment type="catalytic activity">
    <reaction evidence="1">
        <text>deamido-NAD(+) + NH4(+) + ATP = AMP + diphosphate + NAD(+) + H(+)</text>
        <dbReference type="Rhea" id="RHEA:21188"/>
        <dbReference type="ChEBI" id="CHEBI:15378"/>
        <dbReference type="ChEBI" id="CHEBI:28938"/>
        <dbReference type="ChEBI" id="CHEBI:30616"/>
        <dbReference type="ChEBI" id="CHEBI:33019"/>
        <dbReference type="ChEBI" id="CHEBI:57540"/>
        <dbReference type="ChEBI" id="CHEBI:58437"/>
        <dbReference type="ChEBI" id="CHEBI:456215"/>
        <dbReference type="EC" id="6.3.1.5"/>
    </reaction>
</comment>
<comment type="pathway">
    <text evidence="1">Cofactor biosynthesis; NAD(+) biosynthesis; NAD(+) from deamido-NAD(+) (ammonia route): step 1/1.</text>
</comment>
<comment type="subunit">
    <text evidence="1">Homodimer.</text>
</comment>
<comment type="similarity">
    <text evidence="1">Belongs to the NAD synthetase family.</text>
</comment>
<gene>
    <name evidence="1" type="primary">nadE</name>
    <name type="ordered locus">lwe1068</name>
</gene>
<feature type="chain" id="PRO_1000077572" description="NH(3)-dependent NAD(+) synthetase">
    <location>
        <begin position="1"/>
        <end position="274"/>
    </location>
</feature>
<feature type="binding site" evidence="1">
    <location>
        <begin position="46"/>
        <end position="53"/>
    </location>
    <ligand>
        <name>ATP</name>
        <dbReference type="ChEBI" id="CHEBI:30616"/>
    </ligand>
</feature>
<feature type="binding site" evidence="1">
    <location>
        <position position="52"/>
    </location>
    <ligand>
        <name>Mg(2+)</name>
        <dbReference type="ChEBI" id="CHEBI:18420"/>
    </ligand>
</feature>
<feature type="binding site" evidence="1">
    <location>
        <position position="140"/>
    </location>
    <ligand>
        <name>deamido-NAD(+)</name>
        <dbReference type="ChEBI" id="CHEBI:58437"/>
    </ligand>
</feature>
<feature type="binding site" evidence="1">
    <location>
        <position position="160"/>
    </location>
    <ligand>
        <name>ATP</name>
        <dbReference type="ChEBI" id="CHEBI:30616"/>
    </ligand>
</feature>
<feature type="binding site" evidence="1">
    <location>
        <position position="165"/>
    </location>
    <ligand>
        <name>Mg(2+)</name>
        <dbReference type="ChEBI" id="CHEBI:18420"/>
    </ligand>
</feature>
<feature type="binding site" evidence="1">
    <location>
        <position position="173"/>
    </location>
    <ligand>
        <name>deamido-NAD(+)</name>
        <dbReference type="ChEBI" id="CHEBI:58437"/>
    </ligand>
</feature>
<feature type="binding site" evidence="1">
    <location>
        <position position="180"/>
    </location>
    <ligand>
        <name>deamido-NAD(+)</name>
        <dbReference type="ChEBI" id="CHEBI:58437"/>
    </ligand>
</feature>
<feature type="binding site" evidence="1">
    <location>
        <position position="189"/>
    </location>
    <ligand>
        <name>ATP</name>
        <dbReference type="ChEBI" id="CHEBI:30616"/>
    </ligand>
</feature>
<feature type="binding site" evidence="1">
    <location>
        <position position="211"/>
    </location>
    <ligand>
        <name>ATP</name>
        <dbReference type="ChEBI" id="CHEBI:30616"/>
    </ligand>
</feature>
<feature type="binding site" evidence="1">
    <location>
        <begin position="260"/>
        <end position="261"/>
    </location>
    <ligand>
        <name>deamido-NAD(+)</name>
        <dbReference type="ChEBI" id="CHEBI:58437"/>
    </ligand>
</feature>
<proteinExistence type="inferred from homology"/>
<dbReference type="EC" id="6.3.1.5" evidence="1"/>
<dbReference type="EMBL" id="AM263198">
    <property type="protein sequence ID" value="CAK20486.1"/>
    <property type="molecule type" value="Genomic_DNA"/>
</dbReference>
<dbReference type="RefSeq" id="WP_011701889.1">
    <property type="nucleotide sequence ID" value="NC_008555.1"/>
</dbReference>
<dbReference type="SMR" id="A0AHK4"/>
<dbReference type="STRING" id="386043.lwe1068"/>
<dbReference type="GeneID" id="61188955"/>
<dbReference type="KEGG" id="lwe:lwe1068"/>
<dbReference type="eggNOG" id="COG0171">
    <property type="taxonomic scope" value="Bacteria"/>
</dbReference>
<dbReference type="HOGENOM" id="CLU_059327_3_0_9"/>
<dbReference type="OrthoDB" id="9803818at2"/>
<dbReference type="UniPathway" id="UPA00253">
    <property type="reaction ID" value="UER00333"/>
</dbReference>
<dbReference type="Proteomes" id="UP000000779">
    <property type="component" value="Chromosome"/>
</dbReference>
<dbReference type="GO" id="GO:0005737">
    <property type="term" value="C:cytoplasm"/>
    <property type="evidence" value="ECO:0007669"/>
    <property type="project" value="InterPro"/>
</dbReference>
<dbReference type="GO" id="GO:0005524">
    <property type="term" value="F:ATP binding"/>
    <property type="evidence" value="ECO:0007669"/>
    <property type="project" value="UniProtKB-UniRule"/>
</dbReference>
<dbReference type="GO" id="GO:0004359">
    <property type="term" value="F:glutaminase activity"/>
    <property type="evidence" value="ECO:0007669"/>
    <property type="project" value="InterPro"/>
</dbReference>
<dbReference type="GO" id="GO:0046872">
    <property type="term" value="F:metal ion binding"/>
    <property type="evidence" value="ECO:0007669"/>
    <property type="project" value="UniProtKB-KW"/>
</dbReference>
<dbReference type="GO" id="GO:0003952">
    <property type="term" value="F:NAD+ synthase (glutamine-hydrolyzing) activity"/>
    <property type="evidence" value="ECO:0007669"/>
    <property type="project" value="InterPro"/>
</dbReference>
<dbReference type="GO" id="GO:0008795">
    <property type="term" value="F:NAD+ synthase activity"/>
    <property type="evidence" value="ECO:0007669"/>
    <property type="project" value="UniProtKB-UniRule"/>
</dbReference>
<dbReference type="GO" id="GO:0009435">
    <property type="term" value="P:NAD biosynthetic process"/>
    <property type="evidence" value="ECO:0007669"/>
    <property type="project" value="UniProtKB-UniRule"/>
</dbReference>
<dbReference type="CDD" id="cd00553">
    <property type="entry name" value="NAD_synthase"/>
    <property type="match status" value="1"/>
</dbReference>
<dbReference type="FunFam" id="3.40.50.620:FF:000015">
    <property type="entry name" value="NH(3)-dependent NAD(+) synthetase"/>
    <property type="match status" value="1"/>
</dbReference>
<dbReference type="Gene3D" id="3.40.50.620">
    <property type="entry name" value="HUPs"/>
    <property type="match status" value="1"/>
</dbReference>
<dbReference type="HAMAP" id="MF_00193">
    <property type="entry name" value="NadE_ammonia_dep"/>
    <property type="match status" value="1"/>
</dbReference>
<dbReference type="InterPro" id="IPR022310">
    <property type="entry name" value="NAD/GMP_synthase"/>
</dbReference>
<dbReference type="InterPro" id="IPR003694">
    <property type="entry name" value="NAD_synthase"/>
</dbReference>
<dbReference type="InterPro" id="IPR022926">
    <property type="entry name" value="NH(3)-dep_NAD(+)_synth"/>
</dbReference>
<dbReference type="InterPro" id="IPR014729">
    <property type="entry name" value="Rossmann-like_a/b/a_fold"/>
</dbReference>
<dbReference type="NCBIfam" id="TIGR00552">
    <property type="entry name" value="nadE"/>
    <property type="match status" value="1"/>
</dbReference>
<dbReference type="NCBIfam" id="NF001979">
    <property type="entry name" value="PRK00768.1"/>
    <property type="match status" value="1"/>
</dbReference>
<dbReference type="PANTHER" id="PTHR23090">
    <property type="entry name" value="NH 3 /GLUTAMINE-DEPENDENT NAD + SYNTHETASE"/>
    <property type="match status" value="1"/>
</dbReference>
<dbReference type="PANTHER" id="PTHR23090:SF7">
    <property type="entry name" value="NH(3)-DEPENDENT NAD(+) SYNTHETASE"/>
    <property type="match status" value="1"/>
</dbReference>
<dbReference type="Pfam" id="PF02540">
    <property type="entry name" value="NAD_synthase"/>
    <property type="match status" value="1"/>
</dbReference>
<dbReference type="SUPFAM" id="SSF52402">
    <property type="entry name" value="Adenine nucleotide alpha hydrolases-like"/>
    <property type="match status" value="1"/>
</dbReference>
<sequence length="274" mass="30570">MEIRKRILADMQVAETIDAHEEIRKSVEFLKAYLKKNTFLKSFVLGISGGQDSTLTGKLAQLAISEMRDETGDNEYQFFAVSLPYGTQLDESDRQDALNFMNPDNRLTVNIKASVDASVAALAEAGVELSDFAKGNEKARERMKVQYAIAAMHKGVVVGTDHSAEAVTGFYTKYGDGGTDINPLFRLNKRQGKALLKELGCPEHLYLKKPTADLEDNKPALPDEVALGVTYDQIDDYLEGKEVPADAAAKIENWFIKTEHKRHMAITIFDDFWK</sequence>
<evidence type="ECO:0000255" key="1">
    <source>
        <dbReference type="HAMAP-Rule" id="MF_00193"/>
    </source>
</evidence>
<accession>A0AHK4</accession>